<keyword id="KW-0002">3D-structure</keyword>
<keyword id="KW-0044">Antibiotic</keyword>
<keyword id="KW-0929">Antimicrobial</keyword>
<keyword id="KW-0391">Immunity</keyword>
<keyword id="KW-0399">Innate immunity</keyword>
<keyword id="KW-1185">Reference proteome</keyword>
<keyword id="KW-0964">Secreted</keyword>
<keyword id="KW-0732">Signal</keyword>
<dbReference type="EMBL" id="CH477197">
    <property type="protein sequence ID" value="EAT48342.2"/>
    <property type="molecule type" value="Genomic_DNA"/>
</dbReference>
<dbReference type="RefSeq" id="XP_001649181.2">
    <property type="nucleotide sequence ID" value="XM_001649131.2"/>
</dbReference>
<dbReference type="PDB" id="2MMM">
    <property type="method" value="NMR"/>
    <property type="chains" value="A=24-59"/>
</dbReference>
<dbReference type="PDBsum" id="2MMM"/>
<dbReference type="SMR" id="Q17NR1"/>
<dbReference type="STRING" id="7159.Q17NR1"/>
<dbReference type="PaxDb" id="7159-AAEL018349-PA"/>
<dbReference type="eggNOG" id="ENOG502TC3W">
    <property type="taxonomic scope" value="Eukaryota"/>
</dbReference>
<dbReference type="HOGENOM" id="CLU_187909_1_1_1"/>
<dbReference type="PhylomeDB" id="Q17NR1"/>
<dbReference type="EvolutionaryTrace" id="Q17NR1"/>
<dbReference type="Proteomes" id="UP000008820">
    <property type="component" value="Unplaced"/>
</dbReference>
<dbReference type="Proteomes" id="UP000682892">
    <property type="component" value="Chromosome 1"/>
</dbReference>
<dbReference type="GO" id="GO:0005615">
    <property type="term" value="C:extracellular space"/>
    <property type="evidence" value="ECO:0007669"/>
    <property type="project" value="TreeGrafter"/>
</dbReference>
<dbReference type="GO" id="GO:0019731">
    <property type="term" value="P:antibacterial humoral response"/>
    <property type="evidence" value="ECO:0007669"/>
    <property type="project" value="InterPro"/>
</dbReference>
<dbReference type="GO" id="GO:0050829">
    <property type="term" value="P:defense response to Gram-negative bacterium"/>
    <property type="evidence" value="ECO:0007669"/>
    <property type="project" value="UniProtKB-ARBA"/>
</dbReference>
<dbReference type="GO" id="GO:0050830">
    <property type="term" value="P:defense response to Gram-positive bacterium"/>
    <property type="evidence" value="ECO:0007669"/>
    <property type="project" value="TreeGrafter"/>
</dbReference>
<dbReference type="GO" id="GO:0045087">
    <property type="term" value="P:innate immune response"/>
    <property type="evidence" value="ECO:0007669"/>
    <property type="project" value="UniProtKB-KW"/>
</dbReference>
<dbReference type="InterPro" id="IPR000875">
    <property type="entry name" value="Cecropin"/>
</dbReference>
<dbReference type="InterPro" id="IPR020400">
    <property type="entry name" value="Cecropin_insect"/>
</dbReference>
<dbReference type="PANTHER" id="PTHR38329">
    <property type="entry name" value="CECROPIN-A1-RELATED"/>
    <property type="match status" value="1"/>
</dbReference>
<dbReference type="PANTHER" id="PTHR38329:SF1">
    <property type="entry name" value="CECROPIN-A1-RELATED"/>
    <property type="match status" value="1"/>
</dbReference>
<dbReference type="Pfam" id="PF00272">
    <property type="entry name" value="Cecropin"/>
    <property type="match status" value="1"/>
</dbReference>
<gene>
    <name evidence="9" type="primary">CECD</name>
    <name evidence="9" type="ORF">AAEL000598</name>
</gene>
<evidence type="ECO:0000255" key="1"/>
<evidence type="ECO:0000269" key="2">
    <source>
    </source>
</evidence>
<evidence type="ECO:0000269" key="3">
    <source>
    </source>
</evidence>
<evidence type="ECO:0000269" key="4">
    <source>
    </source>
</evidence>
<evidence type="ECO:0000303" key="5">
    <source>
    </source>
</evidence>
<evidence type="ECO:0000303" key="6">
    <source>
    </source>
</evidence>
<evidence type="ECO:0000303" key="7">
    <source>
    </source>
</evidence>
<evidence type="ECO:0000305" key="8"/>
<evidence type="ECO:0000312" key="9">
    <source>
        <dbReference type="EMBL" id="EAT48342.2"/>
    </source>
</evidence>
<evidence type="ECO:0000312" key="10">
    <source>
        <dbReference type="Proteomes" id="UP000682892"/>
    </source>
</evidence>
<evidence type="ECO:0007744" key="11">
    <source>
        <dbReference type="PDB" id="2MMM"/>
    </source>
</evidence>
<feature type="signal peptide" evidence="1">
    <location>
        <begin position="1"/>
        <end position="23"/>
    </location>
</feature>
<feature type="chain" id="PRO_5004186683" description="Aedesin" evidence="1">
    <location>
        <begin position="24"/>
        <end position="59"/>
    </location>
</feature>
<comment type="function">
    <text evidence="2 3 4">Antimicrobial peptide (PubMed:21249175, PubMed:25162372). Exhibits antibacterial activity against Gram-negative bacteria, such as Escherichia coli, Pseudomonas aeruginosa, Acinetobacter baumannii and Klebsiella pneumoniae (PubMed:21249175, PubMed:25162372). Shows no antibacterial effects against Gram-positive bacteria, such as Staphylococcus aureus, Enterococcus faecalis and Enterococcus faecium (PubMed:25162372). Exhibits antiviral activity against all four dengue virus serotypes and chikungunya virus (PubMed:21249175). Exhibits leishmanicidal activity (PubMed:21249175). Partially neutralizes lipopolysaccharides (LPS) (PubMed:30107813). Exhibits anti-inflammatory properties: inhibits LPS-induced iNOS/NOS2 transcription, nitric oxide (NO) and pro-inflammatory cytokine production in mouse macrophages and human peripheral blood mononuclear cells (PBMCs); inhibits LPS-induced activation of MAPK and NF-kappa-B signaling pathways in mouse macrophages (PubMed:30107813).</text>
</comment>
<comment type="subcellular location">
    <subcellularLocation>
        <location evidence="8">Secreted</location>
    </subcellularLocation>
</comment>
<comment type="tissue specificity">
    <text evidence="2">Salivary gland (at protein level).</text>
</comment>
<comment type="induction">
    <text evidence="2">Up-regulated in salivary glands after dengue virus infection at day 5, 9 and 14 (at protein level).</text>
</comment>
<comment type="similarity">
    <text evidence="8">Belongs to the cecropin family.</text>
</comment>
<organism evidence="10">
    <name type="scientific">Aedes aegypti</name>
    <name type="common">Yellowfever mosquito</name>
    <name type="synonym">Culex aegypti</name>
    <dbReference type="NCBI Taxonomy" id="7159"/>
    <lineage>
        <taxon>Eukaryota</taxon>
        <taxon>Metazoa</taxon>
        <taxon>Ecdysozoa</taxon>
        <taxon>Arthropoda</taxon>
        <taxon>Hexapoda</taxon>
        <taxon>Insecta</taxon>
        <taxon>Pterygota</taxon>
        <taxon>Neoptera</taxon>
        <taxon>Endopterygota</taxon>
        <taxon>Diptera</taxon>
        <taxon>Nematocera</taxon>
        <taxon>Culicoidea</taxon>
        <taxon>Culicidae</taxon>
        <taxon>Culicinae</taxon>
        <taxon>Aedini</taxon>
        <taxon>Aedes</taxon>
        <taxon>Stegomyia</taxon>
    </lineage>
</organism>
<name>CECL_AEDAE</name>
<proteinExistence type="evidence at protein level"/>
<sequence length="59" mass="6136">MNFTKLFAIVLLAALVLLGQTEAGGLKKLGKKLEGAGKRVFKASEKALPVVVGIKAIGK</sequence>
<reference evidence="9" key="1">
    <citation type="journal article" date="2007" name="Science">
        <title>Genome sequence of Aedes aegypti, a major arbovirus vector.</title>
        <authorList>
            <person name="Nene V."/>
            <person name="Wortman J.R."/>
            <person name="Lawson D."/>
            <person name="Haas B.J."/>
            <person name="Kodira C.D."/>
            <person name="Tu Z.J."/>
            <person name="Loftus B.J."/>
            <person name="Xi Z."/>
            <person name="Megy K."/>
            <person name="Grabherr M."/>
            <person name="Ren Q."/>
            <person name="Zdobnov E.M."/>
            <person name="Lobo N.F."/>
            <person name="Campbell K.S."/>
            <person name="Brown S.E."/>
            <person name="Bonaldo M.F."/>
            <person name="Zhu J."/>
            <person name="Sinkins S.P."/>
            <person name="Hogenkamp D.G."/>
            <person name="Amedeo P."/>
            <person name="Arensburger P."/>
            <person name="Atkinson P.W."/>
            <person name="Bidwell S.L."/>
            <person name="Biedler J."/>
            <person name="Birney E."/>
            <person name="Bruggner R.V."/>
            <person name="Costas J."/>
            <person name="Coy M.R."/>
            <person name="Crabtree J."/>
            <person name="Crawford M."/>
            <person name="DeBruyn B."/>
            <person name="DeCaprio D."/>
            <person name="Eiglmeier K."/>
            <person name="Eisenstadt E."/>
            <person name="El-Dorry H."/>
            <person name="Gelbart W.M."/>
            <person name="Gomes S.L."/>
            <person name="Hammond M."/>
            <person name="Hannick L.I."/>
            <person name="Hogan J.R."/>
            <person name="Holmes M.H."/>
            <person name="Jaffe D."/>
            <person name="Johnston S.J."/>
            <person name="Kennedy R.C."/>
            <person name="Koo H."/>
            <person name="Kravitz S."/>
            <person name="Kriventseva E.V."/>
            <person name="Kulp D."/>
            <person name="Labutti K."/>
            <person name="Lee E."/>
            <person name="Li S."/>
            <person name="Lovin D.D."/>
            <person name="Mao C."/>
            <person name="Mauceli E."/>
            <person name="Menck C.F."/>
            <person name="Miller J.R."/>
            <person name="Montgomery P."/>
            <person name="Mori A."/>
            <person name="Nascimento A.L."/>
            <person name="Naveira H.F."/>
            <person name="Nusbaum C."/>
            <person name="O'Leary S.B."/>
            <person name="Orvis J."/>
            <person name="Pertea M."/>
            <person name="Quesneville H."/>
            <person name="Reidenbach K.R."/>
            <person name="Rogers Y.-H.C."/>
            <person name="Roth C.W."/>
            <person name="Schneider J.R."/>
            <person name="Schatz M."/>
            <person name="Shumway M."/>
            <person name="Stanke M."/>
            <person name="Stinson E.O."/>
            <person name="Tubio J.M.C."/>
            <person name="Vanzee J.P."/>
            <person name="Verjovski-Almeida S."/>
            <person name="Werner D."/>
            <person name="White O.R."/>
            <person name="Wyder S."/>
            <person name="Zeng Q."/>
            <person name="Zhao Q."/>
            <person name="Zhao Y."/>
            <person name="Hill C.A."/>
            <person name="Raikhel A.S."/>
            <person name="Soares M.B."/>
            <person name="Knudson D.L."/>
            <person name="Lee N.H."/>
            <person name="Galagan J."/>
            <person name="Salzberg S.L."/>
            <person name="Paulsen I.T."/>
            <person name="Dimopoulos G."/>
            <person name="Collins F.H."/>
            <person name="Bruce B."/>
            <person name="Fraser-Liggett C.M."/>
            <person name="Severson D.W."/>
        </authorList>
    </citation>
    <scope>NUCLEOTIDE SEQUENCE [LARGE SCALE GENOMIC DNA]</scope>
    <source>
        <strain evidence="9">Liverpool</strain>
    </source>
</reference>
<reference evidence="8" key="2">
    <citation type="journal article" date="2011" name="PLoS Pathog.">
        <title>Induction of a peptide with activity against a broad spectrum of pathogens in the Aedes aegypti salivary gland, following Infection with Dengue Virus.</title>
        <authorList>
            <person name="Luplertlop N."/>
            <person name="Surasombatpattana P."/>
            <person name="Patramool S."/>
            <person name="Dumas E."/>
            <person name="Wasinpiyamongkol L."/>
            <person name="Saune L."/>
            <person name="Hamel R."/>
            <person name="Bernard E."/>
            <person name="Sereno D."/>
            <person name="Thomas F."/>
            <person name="Piquemal D."/>
            <person name="Yssel H."/>
            <person name="Briant L."/>
            <person name="Misse D."/>
        </authorList>
    </citation>
    <scope>IDENTIFICATION BY MASS SPECTROMETRY</scope>
    <scope>FUNCTION</scope>
    <scope>TISSUE SPECIFICITY</scope>
    <scope>INDUCTION</scope>
</reference>
<reference evidence="8" key="3">
    <citation type="journal article" date="2018" name="Parasit. Vectors">
        <title>Anti-inflammatory activities of Aedes aegypti cecropins and their protection against murine endotoxin shock.</title>
        <authorList>
            <person name="Wei L."/>
            <person name="Yang Y."/>
            <person name="Zhou Y."/>
            <person name="Li M."/>
            <person name="Yang H."/>
            <person name="Mu L."/>
            <person name="Qian Q."/>
            <person name="Wu J."/>
            <person name="Xu W."/>
        </authorList>
    </citation>
    <scope>FUNCTION</scope>
</reference>
<reference evidence="11" key="4">
    <citation type="journal article" date="2014" name="PLoS ONE">
        <title>Aedesin: structure and antimicrobial activity against multidrug resistant bacterial strains.</title>
        <authorList>
            <person name="Godreuil S."/>
            <person name="Leban N."/>
            <person name="Padilla A."/>
            <person name="Hamel R."/>
            <person name="Luplertlop N."/>
            <person name="Chauffour A."/>
            <person name="Vittecoq M."/>
            <person name="Hoh F."/>
            <person name="Thomas F."/>
            <person name="Sougakoff W."/>
            <person name="Lionne C."/>
            <person name="Yssel H."/>
            <person name="Misse D."/>
        </authorList>
    </citation>
    <scope>STRUCTURE BY NMR OF 24-59</scope>
    <scope>FUNCTION</scope>
</reference>
<accession>Q17NR1</accession>
<protein>
    <recommendedName>
        <fullName evidence="6 7">Aedesin</fullName>
    </recommendedName>
    <alternativeName>
        <fullName evidence="7">AeaeCec4</fullName>
    </alternativeName>
    <alternativeName>
        <fullName evidence="5">Cecropin-like peptide</fullName>
    </alternativeName>
</protein>